<protein>
    <recommendedName>
        <fullName>Phosphoribosyl-ATP pyrophosphatase</fullName>
        <shortName>PRA-PH</shortName>
        <ecNumber>3.6.1.31</ecNumber>
    </recommendedName>
</protein>
<gene>
    <name type="primary">hisE</name>
    <name type="ordered locus">Cgl1505</name>
    <name type="ordered locus">cg1699</name>
</gene>
<dbReference type="EC" id="3.6.1.31"/>
<dbReference type="EMBL" id="AF086704">
    <property type="protein sequence ID" value="AAD13184.1"/>
    <property type="molecule type" value="Genomic_DNA"/>
</dbReference>
<dbReference type="EMBL" id="BA000036">
    <property type="protein sequence ID" value="BAB98898.1"/>
    <property type="molecule type" value="Genomic_DNA"/>
</dbReference>
<dbReference type="EMBL" id="BX927152">
    <property type="protein sequence ID" value="CAF21513.1"/>
    <property type="molecule type" value="Genomic_DNA"/>
</dbReference>
<dbReference type="RefSeq" id="NP_600721.1">
    <property type="nucleotide sequence ID" value="NC_003450.3"/>
</dbReference>
<dbReference type="SMR" id="Q9Z471"/>
<dbReference type="STRING" id="196627.cg1699"/>
<dbReference type="KEGG" id="cgb:cg1699"/>
<dbReference type="KEGG" id="cgl:Cgl1505"/>
<dbReference type="PATRIC" id="fig|196627.13.peg.1472"/>
<dbReference type="eggNOG" id="COG0140">
    <property type="taxonomic scope" value="Bacteria"/>
</dbReference>
<dbReference type="HOGENOM" id="CLU_123337_2_1_11"/>
<dbReference type="OrthoDB" id="3212875at2"/>
<dbReference type="BioCyc" id="CORYNE:G18NG-11088-MONOMER"/>
<dbReference type="UniPathway" id="UPA00031">
    <property type="reaction ID" value="UER00007"/>
</dbReference>
<dbReference type="Proteomes" id="UP000000582">
    <property type="component" value="Chromosome"/>
</dbReference>
<dbReference type="Proteomes" id="UP000001009">
    <property type="component" value="Chromosome"/>
</dbReference>
<dbReference type="GO" id="GO:0005737">
    <property type="term" value="C:cytoplasm"/>
    <property type="evidence" value="ECO:0007669"/>
    <property type="project" value="UniProtKB-SubCell"/>
</dbReference>
<dbReference type="GO" id="GO:0005524">
    <property type="term" value="F:ATP binding"/>
    <property type="evidence" value="ECO:0007669"/>
    <property type="project" value="UniProtKB-KW"/>
</dbReference>
<dbReference type="GO" id="GO:0004636">
    <property type="term" value="F:phosphoribosyl-ATP diphosphatase activity"/>
    <property type="evidence" value="ECO:0007669"/>
    <property type="project" value="UniProtKB-UniRule"/>
</dbReference>
<dbReference type="GO" id="GO:0000105">
    <property type="term" value="P:L-histidine biosynthetic process"/>
    <property type="evidence" value="ECO:0007669"/>
    <property type="project" value="UniProtKB-UniRule"/>
</dbReference>
<dbReference type="CDD" id="cd11547">
    <property type="entry name" value="NTP-PPase_HisE"/>
    <property type="match status" value="1"/>
</dbReference>
<dbReference type="Gene3D" id="1.10.287.1080">
    <property type="entry name" value="MazG-like"/>
    <property type="match status" value="1"/>
</dbReference>
<dbReference type="HAMAP" id="MF_01020">
    <property type="entry name" value="HisE"/>
    <property type="match status" value="1"/>
</dbReference>
<dbReference type="InterPro" id="IPR008179">
    <property type="entry name" value="HisE"/>
</dbReference>
<dbReference type="InterPro" id="IPR021130">
    <property type="entry name" value="PRib-ATP_PPHydrolase-like"/>
</dbReference>
<dbReference type="NCBIfam" id="TIGR03188">
    <property type="entry name" value="histidine_hisI"/>
    <property type="match status" value="1"/>
</dbReference>
<dbReference type="NCBIfam" id="NF001610">
    <property type="entry name" value="PRK00400.1-1"/>
    <property type="match status" value="1"/>
</dbReference>
<dbReference type="PANTHER" id="PTHR42945">
    <property type="entry name" value="HISTIDINE BIOSYNTHESIS BIFUNCTIONAL PROTEIN"/>
    <property type="match status" value="1"/>
</dbReference>
<dbReference type="PANTHER" id="PTHR42945:SF1">
    <property type="entry name" value="HISTIDINE BIOSYNTHESIS BIFUNCTIONAL PROTEIN HIS7"/>
    <property type="match status" value="1"/>
</dbReference>
<dbReference type="Pfam" id="PF01503">
    <property type="entry name" value="PRA-PH"/>
    <property type="match status" value="1"/>
</dbReference>
<dbReference type="SUPFAM" id="SSF101386">
    <property type="entry name" value="all-alpha NTP pyrophosphatases"/>
    <property type="match status" value="1"/>
</dbReference>
<reference key="1">
    <citation type="submission" date="1998-08" db="EMBL/GenBank/DDBJ databases">
        <authorList>
            <person name="Kwon J.H."/>
            <person name="Lee M.-S."/>
        </authorList>
    </citation>
    <scope>NUCLEOTIDE SEQUENCE [GENOMIC DNA]</scope>
    <source>
        <strain>ATCC 13059 / LMG 3658 / NCIB 10332 / AS019 / 613</strain>
    </source>
</reference>
<reference key="2">
    <citation type="journal article" date="2003" name="Appl. Microbiol. Biotechnol.">
        <title>The Corynebacterium glutamicum genome: features and impacts on biotechnological processes.</title>
        <authorList>
            <person name="Ikeda M."/>
            <person name="Nakagawa S."/>
        </authorList>
    </citation>
    <scope>NUCLEOTIDE SEQUENCE [LARGE SCALE GENOMIC DNA]</scope>
    <source>
        <strain>ATCC 13032 / DSM 20300 / JCM 1318 / BCRC 11384 / CCUG 27702 / LMG 3730 / NBRC 12168 / NCIMB 10025 / NRRL B-2784 / 534</strain>
    </source>
</reference>
<reference key="3">
    <citation type="journal article" date="2003" name="J. Biotechnol.">
        <title>The complete Corynebacterium glutamicum ATCC 13032 genome sequence and its impact on the production of L-aspartate-derived amino acids and vitamins.</title>
        <authorList>
            <person name="Kalinowski J."/>
            <person name="Bathe B."/>
            <person name="Bartels D."/>
            <person name="Bischoff N."/>
            <person name="Bott M."/>
            <person name="Burkovski A."/>
            <person name="Dusch N."/>
            <person name="Eggeling L."/>
            <person name="Eikmanns B.J."/>
            <person name="Gaigalat L."/>
            <person name="Goesmann A."/>
            <person name="Hartmann M."/>
            <person name="Huthmacher K."/>
            <person name="Kraemer R."/>
            <person name="Linke B."/>
            <person name="McHardy A.C."/>
            <person name="Meyer F."/>
            <person name="Moeckel B."/>
            <person name="Pfefferle W."/>
            <person name="Puehler A."/>
            <person name="Rey D.A."/>
            <person name="Rueckert C."/>
            <person name="Rupp O."/>
            <person name="Sahm H."/>
            <person name="Wendisch V.F."/>
            <person name="Wiegraebe I."/>
            <person name="Tauch A."/>
        </authorList>
    </citation>
    <scope>NUCLEOTIDE SEQUENCE [LARGE SCALE GENOMIC DNA]</scope>
    <source>
        <strain>ATCC 13032 / DSM 20300 / JCM 1318 / BCRC 11384 / CCUG 27702 / LMG 3730 / NBRC 12168 / NCIMB 10025 / NRRL B-2784 / 534</strain>
    </source>
</reference>
<accession>Q9Z471</accession>
<comment type="catalytic activity">
    <reaction>
        <text>1-(5-phospho-beta-D-ribosyl)-ATP + H2O = 1-(5-phospho-beta-D-ribosyl)-5'-AMP + diphosphate + H(+)</text>
        <dbReference type="Rhea" id="RHEA:22828"/>
        <dbReference type="ChEBI" id="CHEBI:15377"/>
        <dbReference type="ChEBI" id="CHEBI:15378"/>
        <dbReference type="ChEBI" id="CHEBI:33019"/>
        <dbReference type="ChEBI" id="CHEBI:59457"/>
        <dbReference type="ChEBI" id="CHEBI:73183"/>
        <dbReference type="EC" id="3.6.1.31"/>
    </reaction>
</comment>
<comment type="pathway">
    <text>Amino-acid biosynthesis; L-histidine biosynthesis; L-histidine from 5-phospho-alpha-D-ribose 1-diphosphate: step 2/9.</text>
</comment>
<comment type="subcellular location">
    <subcellularLocation>
        <location evidence="1">Cytoplasm</location>
    </subcellularLocation>
</comment>
<comment type="similarity">
    <text evidence="2">Belongs to the PRA-PH family.</text>
</comment>
<keyword id="KW-0028">Amino-acid biosynthesis</keyword>
<keyword id="KW-0067">ATP-binding</keyword>
<keyword id="KW-0963">Cytoplasm</keyword>
<keyword id="KW-0368">Histidine biosynthesis</keyword>
<keyword id="KW-0378">Hydrolase</keyword>
<keyword id="KW-0547">Nucleotide-binding</keyword>
<keyword id="KW-1185">Reference proteome</keyword>
<organism>
    <name type="scientific">Corynebacterium glutamicum (strain ATCC 13032 / DSM 20300 / JCM 1318 / BCRC 11384 / CCUG 27702 / LMG 3730 / NBRC 12168 / NCIMB 10025 / NRRL B-2784 / 534)</name>
    <dbReference type="NCBI Taxonomy" id="196627"/>
    <lineage>
        <taxon>Bacteria</taxon>
        <taxon>Bacillati</taxon>
        <taxon>Actinomycetota</taxon>
        <taxon>Actinomycetes</taxon>
        <taxon>Mycobacteriales</taxon>
        <taxon>Corynebacteriaceae</taxon>
        <taxon>Corynebacterium</taxon>
    </lineage>
</organism>
<sequence length="87" mass="9822">MKTFDSLYEELLNRAQTRPEGSGTVAALDKGIHHLGKKVIEEAGEVWIAAEYETDEELAGEISQLIYWTQVIMVARGLKPEDIYKNL</sequence>
<feature type="chain" id="PRO_0000136361" description="Phosphoribosyl-ATP pyrophosphatase">
    <location>
        <begin position="1"/>
        <end position="87"/>
    </location>
</feature>
<name>HIS2_CORGL</name>
<proteinExistence type="inferred from homology"/>
<evidence type="ECO:0000250" key="1"/>
<evidence type="ECO:0000305" key="2"/>